<accession>Q9ZB79</accession>
<sequence length="114" mass="13153">MVVGIGIDVVQLKRFLTLVETSDCFAKRLLTSNELNSYWKLNNNQRANFLAVHWTLKEAIYKATSHIKPLFTKLEIYKLNNQYRCEFIQNINLLLSVSYTNCHVSAICLAQQNG</sequence>
<name>ACPS_MYCGE</name>
<organism>
    <name type="scientific">Mycoplasma genitalium (strain ATCC 33530 / DSM 19775 / NCTC 10195 / G37)</name>
    <name type="common">Mycoplasmoides genitalium</name>
    <dbReference type="NCBI Taxonomy" id="243273"/>
    <lineage>
        <taxon>Bacteria</taxon>
        <taxon>Bacillati</taxon>
        <taxon>Mycoplasmatota</taxon>
        <taxon>Mycoplasmoidales</taxon>
        <taxon>Mycoplasmoidaceae</taxon>
        <taxon>Mycoplasmoides</taxon>
    </lineage>
</organism>
<evidence type="ECO:0000255" key="1">
    <source>
        <dbReference type="HAMAP-Rule" id="MF_00101"/>
    </source>
</evidence>
<dbReference type="EC" id="2.7.8.7" evidence="1"/>
<dbReference type="EMBL" id="L43967">
    <property type="protein sequence ID" value="AAC71438.1"/>
    <property type="molecule type" value="Genomic_DNA"/>
</dbReference>
<dbReference type="RefSeq" id="WP_009885751.1">
    <property type="nucleotide sequence ID" value="NC_000908.2"/>
</dbReference>
<dbReference type="SMR" id="Q9ZB79"/>
<dbReference type="FunCoup" id="Q9ZB79">
    <property type="interactions" value="44"/>
</dbReference>
<dbReference type="STRING" id="243273.MG_482"/>
<dbReference type="GeneID" id="88282346"/>
<dbReference type="KEGG" id="mge:MG_482"/>
<dbReference type="eggNOG" id="COG0736">
    <property type="taxonomic scope" value="Bacteria"/>
</dbReference>
<dbReference type="HOGENOM" id="CLU_089696_1_1_14"/>
<dbReference type="InParanoid" id="Q9ZB79"/>
<dbReference type="OrthoDB" id="389495at2"/>
<dbReference type="BioCyc" id="MGEN243273:G1GJ2-247-MONOMER"/>
<dbReference type="Proteomes" id="UP000000807">
    <property type="component" value="Chromosome"/>
</dbReference>
<dbReference type="GO" id="GO:0005737">
    <property type="term" value="C:cytoplasm"/>
    <property type="evidence" value="ECO:0007669"/>
    <property type="project" value="UniProtKB-SubCell"/>
</dbReference>
<dbReference type="GO" id="GO:0008897">
    <property type="term" value="F:holo-[acyl-carrier-protein] synthase activity"/>
    <property type="evidence" value="ECO:0007669"/>
    <property type="project" value="UniProtKB-UniRule"/>
</dbReference>
<dbReference type="GO" id="GO:0000287">
    <property type="term" value="F:magnesium ion binding"/>
    <property type="evidence" value="ECO:0007669"/>
    <property type="project" value="UniProtKB-UniRule"/>
</dbReference>
<dbReference type="GO" id="GO:0006633">
    <property type="term" value="P:fatty acid biosynthetic process"/>
    <property type="evidence" value="ECO:0007669"/>
    <property type="project" value="UniProtKB-UniRule"/>
</dbReference>
<dbReference type="Gene3D" id="3.90.470.20">
    <property type="entry name" value="4'-phosphopantetheinyl transferase domain"/>
    <property type="match status" value="1"/>
</dbReference>
<dbReference type="HAMAP" id="MF_00101">
    <property type="entry name" value="AcpS"/>
    <property type="match status" value="1"/>
</dbReference>
<dbReference type="InterPro" id="IPR008278">
    <property type="entry name" value="4-PPantetheinyl_Trfase_dom"/>
</dbReference>
<dbReference type="InterPro" id="IPR037143">
    <property type="entry name" value="4-PPantetheinyl_Trfase_dom_sf"/>
</dbReference>
<dbReference type="InterPro" id="IPR002582">
    <property type="entry name" value="ACPS"/>
</dbReference>
<dbReference type="InterPro" id="IPR004568">
    <property type="entry name" value="Ppantetheine-prot_Trfase_dom"/>
</dbReference>
<dbReference type="NCBIfam" id="TIGR00556">
    <property type="entry name" value="pantethn_trn"/>
    <property type="match status" value="1"/>
</dbReference>
<dbReference type="NCBIfam" id="NF000835">
    <property type="entry name" value="PRK00070.4-1"/>
    <property type="match status" value="1"/>
</dbReference>
<dbReference type="Pfam" id="PF01648">
    <property type="entry name" value="ACPS"/>
    <property type="match status" value="1"/>
</dbReference>
<dbReference type="SUPFAM" id="SSF56214">
    <property type="entry name" value="4'-phosphopantetheinyl transferase"/>
    <property type="match status" value="1"/>
</dbReference>
<comment type="function">
    <text evidence="1">Transfers the 4'-phosphopantetheine moiety from coenzyme A to a Ser of acyl-carrier-protein.</text>
</comment>
<comment type="catalytic activity">
    <reaction evidence="1">
        <text>apo-[ACP] + CoA = holo-[ACP] + adenosine 3',5'-bisphosphate + H(+)</text>
        <dbReference type="Rhea" id="RHEA:12068"/>
        <dbReference type="Rhea" id="RHEA-COMP:9685"/>
        <dbReference type="Rhea" id="RHEA-COMP:9690"/>
        <dbReference type="ChEBI" id="CHEBI:15378"/>
        <dbReference type="ChEBI" id="CHEBI:29999"/>
        <dbReference type="ChEBI" id="CHEBI:57287"/>
        <dbReference type="ChEBI" id="CHEBI:58343"/>
        <dbReference type="ChEBI" id="CHEBI:64479"/>
        <dbReference type="EC" id="2.7.8.7"/>
    </reaction>
</comment>
<comment type="cofactor">
    <cofactor evidence="1">
        <name>Mg(2+)</name>
        <dbReference type="ChEBI" id="CHEBI:18420"/>
    </cofactor>
</comment>
<comment type="subcellular location">
    <subcellularLocation>
        <location evidence="1">Cytoplasm</location>
    </subcellularLocation>
</comment>
<comment type="similarity">
    <text evidence="1">Belongs to the P-Pant transferase superfamily. AcpS family.</text>
</comment>
<reference key="1">
    <citation type="journal article" date="1995" name="Science">
        <title>The minimal gene complement of Mycoplasma genitalium.</title>
        <authorList>
            <person name="Fraser C.M."/>
            <person name="Gocayne J.D."/>
            <person name="White O."/>
            <person name="Adams M.D."/>
            <person name="Clayton R.A."/>
            <person name="Fleischmann R.D."/>
            <person name="Bult C.J."/>
            <person name="Kerlavage A.R."/>
            <person name="Sutton G.G."/>
            <person name="Kelley J.M."/>
            <person name="Fritchman J.L."/>
            <person name="Weidman J.F."/>
            <person name="Small K.V."/>
            <person name="Sandusky M."/>
            <person name="Fuhrmann J.L."/>
            <person name="Nguyen D.T."/>
            <person name="Utterback T.R."/>
            <person name="Saudek D.M."/>
            <person name="Phillips C.A."/>
            <person name="Merrick J.M."/>
            <person name="Tomb J.-F."/>
            <person name="Dougherty B.A."/>
            <person name="Bott K.F."/>
            <person name="Hu P.-C."/>
            <person name="Lucier T.S."/>
            <person name="Peterson S.N."/>
            <person name="Smith H.O."/>
            <person name="Hutchison C.A. III"/>
            <person name="Venter J.C."/>
        </authorList>
    </citation>
    <scope>NUCLEOTIDE SEQUENCE [LARGE SCALE GENOMIC DNA]</scope>
    <source>
        <strain>ATCC 33530 / DSM 19775 / NCTC 10195 / G37</strain>
    </source>
</reference>
<reference key="2">
    <citation type="submission" date="1998-10" db="EMBL/GenBank/DDBJ databases">
        <authorList>
            <person name="Fraser C.M."/>
            <person name="Gocayne J.D."/>
            <person name="White O."/>
            <person name="Adams M.D."/>
            <person name="Clayton R.A."/>
            <person name="Fleischmann R.D."/>
            <person name="Bult C.J."/>
            <person name="Kerlavage A.R."/>
            <person name="Sutton G.G."/>
            <person name="Kelley J.M."/>
            <person name="Fritchman J.L."/>
            <person name="Weidman J.F."/>
            <person name="Small K.V."/>
            <person name="Sandusky M."/>
            <person name="Fuhrmann J.L."/>
            <person name="Nguyen D.T."/>
            <person name="Utterback T.R."/>
            <person name="Saudek D.M."/>
            <person name="Phillips C.A."/>
            <person name="Merrick J.M."/>
            <person name="Tomb J.-F."/>
            <person name="Dougherty B.A."/>
            <person name="Bott K.F."/>
            <person name="Hu P.-C."/>
            <person name="Lucier T.S."/>
            <person name="Peterson S.N."/>
            <person name="Smith H.O."/>
            <person name="Hutchison C.A. III"/>
            <person name="Venter J.C."/>
        </authorList>
    </citation>
    <scope>IDENTIFICATION</scope>
</reference>
<feature type="chain" id="PRO_0000175668" description="Holo-[acyl-carrier-protein] synthase">
    <location>
        <begin position="1"/>
        <end position="114"/>
    </location>
</feature>
<feature type="binding site" evidence="1">
    <location>
        <position position="8"/>
    </location>
    <ligand>
        <name>Mg(2+)</name>
        <dbReference type="ChEBI" id="CHEBI:18420"/>
    </ligand>
</feature>
<feature type="binding site" evidence="1">
    <location>
        <position position="58"/>
    </location>
    <ligand>
        <name>Mg(2+)</name>
        <dbReference type="ChEBI" id="CHEBI:18420"/>
    </ligand>
</feature>
<keyword id="KW-0963">Cytoplasm</keyword>
<keyword id="KW-0275">Fatty acid biosynthesis</keyword>
<keyword id="KW-0276">Fatty acid metabolism</keyword>
<keyword id="KW-0444">Lipid biosynthesis</keyword>
<keyword id="KW-0443">Lipid metabolism</keyword>
<keyword id="KW-0460">Magnesium</keyword>
<keyword id="KW-0479">Metal-binding</keyword>
<keyword id="KW-1185">Reference proteome</keyword>
<keyword id="KW-0808">Transferase</keyword>
<gene>
    <name evidence="1" type="primary">acpS</name>
    <name type="ordered locus">MG211.1</name>
</gene>
<proteinExistence type="inferred from homology"/>
<protein>
    <recommendedName>
        <fullName evidence="1">Holo-[acyl-carrier-protein] synthase</fullName>
        <shortName evidence="1">Holo-ACP synthase</shortName>
        <ecNumber evidence="1">2.7.8.7</ecNumber>
    </recommendedName>
    <alternativeName>
        <fullName evidence="1">4'-phosphopantetheinyl transferase AcpS</fullName>
    </alternativeName>
</protein>